<proteinExistence type="evidence at protein level"/>
<evidence type="ECO:0000250" key="1">
    <source>
        <dbReference type="UniProtKB" id="P56732"/>
    </source>
</evidence>
<evidence type="ECO:0000255" key="2"/>
<evidence type="ECO:0000255" key="3">
    <source>
        <dbReference type="PROSITE-ProRule" id="PRU00656"/>
    </source>
</evidence>
<evidence type="ECO:0000269" key="4">
    <source>
    </source>
</evidence>
<evidence type="ECO:0000305" key="5"/>
<gene>
    <name type="primary">AVR3</name>
</gene>
<dbReference type="EMBL" id="Z21612">
    <property type="status" value="NOT_ANNOTATED_CDS"/>
    <property type="molecule type" value="Genomic_DNA"/>
</dbReference>
<dbReference type="EMBL" id="Z21536">
    <property type="status" value="NOT_ANNOTATED_CDS"/>
    <property type="molecule type" value="mRNA"/>
</dbReference>
<dbReference type="PIR" id="S42203">
    <property type="entry name" value="S42203"/>
</dbReference>
<dbReference type="SMR" id="P56733"/>
<dbReference type="FunCoup" id="P56733">
    <property type="interactions" value="7"/>
</dbReference>
<dbReference type="GlyCosmos" id="P56733">
    <property type="glycosylation" value="2 sites, No reported glycans"/>
</dbReference>
<dbReference type="GlyGen" id="P56733">
    <property type="glycosylation" value="2 sites"/>
</dbReference>
<dbReference type="VEuPathDB" id="HostDB:LOC121108603"/>
<dbReference type="InParanoid" id="P56733"/>
<dbReference type="PhylomeDB" id="P56733"/>
<dbReference type="Proteomes" id="UP000000539">
    <property type="component" value="Unassembled WGS sequence"/>
</dbReference>
<dbReference type="GO" id="GO:0005576">
    <property type="term" value="C:extracellular region"/>
    <property type="evidence" value="ECO:0007669"/>
    <property type="project" value="UniProtKB-SubCell"/>
</dbReference>
<dbReference type="GO" id="GO:0009374">
    <property type="term" value="F:biotin binding"/>
    <property type="evidence" value="ECO:0000318"/>
    <property type="project" value="GO_Central"/>
</dbReference>
<dbReference type="Gene3D" id="2.40.128.30">
    <property type="entry name" value="Avidin-like"/>
    <property type="match status" value="1"/>
</dbReference>
<dbReference type="InterPro" id="IPR005469">
    <property type="entry name" value="Avidin"/>
</dbReference>
<dbReference type="InterPro" id="IPR017889">
    <property type="entry name" value="Avidin-like_CS"/>
</dbReference>
<dbReference type="InterPro" id="IPR036896">
    <property type="entry name" value="Avidin-like_sf"/>
</dbReference>
<dbReference type="InterPro" id="IPR005468">
    <property type="entry name" value="Avidin/str"/>
</dbReference>
<dbReference type="InterPro" id="IPR051764">
    <property type="entry name" value="Avidin/Streptavidin-rel"/>
</dbReference>
<dbReference type="PANTHER" id="PTHR34399:SF3">
    <property type="entry name" value="AVID PROTEIN-RELATED"/>
    <property type="match status" value="1"/>
</dbReference>
<dbReference type="PANTHER" id="PTHR34399">
    <property type="entry name" value="AVIDIN-RELATED"/>
    <property type="match status" value="1"/>
</dbReference>
<dbReference type="Pfam" id="PF01382">
    <property type="entry name" value="Avidin"/>
    <property type="match status" value="1"/>
</dbReference>
<dbReference type="PRINTS" id="PR00709">
    <property type="entry name" value="AVIDIN"/>
</dbReference>
<dbReference type="SUPFAM" id="SSF50876">
    <property type="entry name" value="Avidin/streptavidin"/>
    <property type="match status" value="1"/>
</dbReference>
<dbReference type="PROSITE" id="PS00577">
    <property type="entry name" value="AVIDIN_1"/>
    <property type="match status" value="1"/>
</dbReference>
<dbReference type="PROSITE" id="PS51326">
    <property type="entry name" value="AVIDIN_2"/>
    <property type="match status" value="1"/>
</dbReference>
<comment type="function">
    <text evidence="4">Forms a strong non-covalent specific complex with biotin.</text>
</comment>
<comment type="subunit">
    <text evidence="3 4">Homotetramer.</text>
</comment>
<comment type="subcellular location">
    <subcellularLocation>
        <location evidence="3">Secreted</location>
    </subcellularLocation>
</comment>
<comment type="PTM">
    <text evidence="4">Glycosylated.</text>
</comment>
<comment type="similarity">
    <text evidence="5">Belongs to the avidin/streptavidin family.</text>
</comment>
<accession>P56733</accession>
<name>AVR3_CHICK</name>
<protein>
    <recommendedName>
        <fullName>Avidin-related protein 3</fullName>
    </recommendedName>
</protein>
<keyword id="KW-0092">Biotin</keyword>
<keyword id="KW-1015">Disulfide bond</keyword>
<keyword id="KW-0325">Glycoprotein</keyword>
<keyword id="KW-1185">Reference proteome</keyword>
<keyword id="KW-0964">Secreted</keyword>
<keyword id="KW-0732">Signal</keyword>
<reference key="1">
    <citation type="journal article" date="1994" name="Eur. J. Biochem.">
        <title>Molecular cloning and nucleotide sequence of chicken avidin-related genes 1-5.</title>
        <authorList>
            <person name="Keinaenen R.A."/>
            <person name="Wallen M.J."/>
            <person name="Kristo P.A."/>
            <person name="Laukkanen M.O."/>
            <person name="Toimela T.A."/>
            <person name="Helenius M.A."/>
            <person name="Kulomaa M.S."/>
        </authorList>
    </citation>
    <scope>NUCLEOTIDE SEQUENCE [GENOMIC DNA / MRNA]</scope>
    <source>
        <strain>White leghorn</strain>
        <tissue>Oviduct</tissue>
    </source>
</reference>
<reference key="2">
    <citation type="journal article" date="2002" name="Biochem. J.">
        <title>Chicken avidin-related proteins show altered biotin-binding and physico-chemical properties as compared with avidin.</title>
        <authorList>
            <person name="Laitinen O.H."/>
            <person name="Hytoenen V.P."/>
            <person name="Ahlroth M.K."/>
            <person name="Pentikaeinen O.T."/>
            <person name="Gallagher C."/>
            <person name="Nordlund H.R."/>
            <person name="Ovod V."/>
            <person name="Marttila A.T."/>
            <person name="Porkka E."/>
            <person name="Heino S."/>
            <person name="Johnson M.S."/>
            <person name="Airenne K.J."/>
            <person name="Kulomaa M.S."/>
        </authorList>
    </citation>
    <scope>FUNCTION</scope>
    <scope>SUBUNIT</scope>
    <scope>GLYCOSYLATION</scope>
</reference>
<sequence>MVHTTSPLLLLLLLSLALVAPSLSARKCSLTGKWTNNLGSIMTIRAVNSRGEFAGTYLTAVADNPGNIKLSPLLGIQHKRACQPTFGFTVHWNFSESTSVFVGQCFIDRSGKEVLKTKWLQRLAVDDISDDWKATRVGYNNFTRQRTVEE</sequence>
<feature type="signal peptide" evidence="2">
    <location>
        <begin position="1"/>
        <end position="24"/>
    </location>
</feature>
<feature type="chain" id="PRO_0000002725" description="Avidin-related protein 3">
    <location>
        <begin position="25"/>
        <end position="150"/>
    </location>
</feature>
<feature type="domain" description="Avidin-like" evidence="3">
    <location>
        <begin position="26"/>
        <end position="147"/>
    </location>
</feature>
<feature type="binding site" evidence="1">
    <location>
        <position position="36"/>
    </location>
    <ligand>
        <name>biotin</name>
        <dbReference type="ChEBI" id="CHEBI:57586"/>
    </ligand>
</feature>
<feature type="binding site" evidence="1">
    <location>
        <position position="40"/>
    </location>
    <ligand>
        <name>biotin</name>
        <dbReference type="ChEBI" id="CHEBI:57586"/>
    </ligand>
</feature>
<feature type="binding site" evidence="1">
    <location>
        <position position="57"/>
    </location>
    <ligand>
        <name>biotin</name>
        <dbReference type="ChEBI" id="CHEBI:57586"/>
    </ligand>
</feature>
<feature type="binding site" evidence="1">
    <location>
        <position position="59"/>
    </location>
    <ligand>
        <name>biotin</name>
        <dbReference type="ChEBI" id="CHEBI:57586"/>
    </ligand>
</feature>
<feature type="binding site" evidence="1">
    <location>
        <position position="63"/>
    </location>
    <ligand>
        <name>biotin</name>
        <dbReference type="ChEBI" id="CHEBI:57586"/>
    </ligand>
</feature>
<feature type="binding site" evidence="1">
    <location>
        <position position="95"/>
    </location>
    <ligand>
        <name>biotin</name>
        <dbReference type="ChEBI" id="CHEBI:57586"/>
    </ligand>
</feature>
<feature type="binding site" evidence="1">
    <location>
        <position position="99"/>
    </location>
    <ligand>
        <name>biotin</name>
        <dbReference type="ChEBI" id="CHEBI:57586"/>
    </ligand>
</feature>
<feature type="binding site" evidence="1">
    <location>
        <position position="140"/>
    </location>
    <ligand>
        <name>biotin</name>
        <dbReference type="ChEBI" id="CHEBI:57586"/>
    </ligand>
</feature>
<feature type="glycosylation site" description="N-linked (GlcNAc...) asparagine" evidence="2">
    <location>
        <position position="93"/>
    </location>
</feature>
<feature type="glycosylation site" description="N-linked (GlcNAc...) asparagine" evidence="2">
    <location>
        <position position="141"/>
    </location>
</feature>
<feature type="disulfide bond" evidence="1">
    <location>
        <begin position="28"/>
        <end position="105"/>
    </location>
</feature>
<organism>
    <name type="scientific">Gallus gallus</name>
    <name type="common">Chicken</name>
    <dbReference type="NCBI Taxonomy" id="9031"/>
    <lineage>
        <taxon>Eukaryota</taxon>
        <taxon>Metazoa</taxon>
        <taxon>Chordata</taxon>
        <taxon>Craniata</taxon>
        <taxon>Vertebrata</taxon>
        <taxon>Euteleostomi</taxon>
        <taxon>Archelosauria</taxon>
        <taxon>Archosauria</taxon>
        <taxon>Dinosauria</taxon>
        <taxon>Saurischia</taxon>
        <taxon>Theropoda</taxon>
        <taxon>Coelurosauria</taxon>
        <taxon>Aves</taxon>
        <taxon>Neognathae</taxon>
        <taxon>Galloanserae</taxon>
        <taxon>Galliformes</taxon>
        <taxon>Phasianidae</taxon>
        <taxon>Phasianinae</taxon>
        <taxon>Gallus</taxon>
    </lineage>
</organism>